<sequence>MILKNVKLKSGEITVPGDKSLSHRSVLFAALCKGKSKVTGFLEAEDPLNTMSAFTKLGLKVRKVKPGEYEFESPGKRGFISPNVDLDFGNAGTGIRLSAGLLCGLPGVNAVLTGDGSLKKRPMGRIIKPLTAMGASILGLGEKETAPLKVEGKKLKSFRYESPIASAQIKSCLMLAAIASETDLEYSENILSRDHTENMFRFLGNKIEQISPFHFKIEPPYVLNGGEFKVPGDISSAAFFLVLGVLAKEGNLLVRNIGLNPARIGILKALELMGAKIEIRNQRMECGEPVGDLKTYPSILNKTNIPKSLIPSIIDEIPILSVAGLFAKGGFEIRHAEELRAKESDRIHTMVSNFRALGIEVEEYPDGYAFDGTSPQSLEIWKFLASGKKISILSHMDHRITMSFLIFKTLSGFNLHIDETSWIETSFPGFEKLLESCLDE</sequence>
<keyword id="KW-0028">Amino-acid biosynthesis</keyword>
<keyword id="KW-0057">Aromatic amino acid biosynthesis</keyword>
<keyword id="KW-0963">Cytoplasm</keyword>
<keyword id="KW-0808">Transferase</keyword>
<name>AROA_LEPBJ</name>
<gene>
    <name evidence="1" type="primary">aroA</name>
    <name type="ordered locus">LBJ_0934</name>
</gene>
<proteinExistence type="inferred from homology"/>
<organism>
    <name type="scientific">Leptospira borgpetersenii serovar Hardjo-bovis (strain JB197)</name>
    <dbReference type="NCBI Taxonomy" id="355277"/>
    <lineage>
        <taxon>Bacteria</taxon>
        <taxon>Pseudomonadati</taxon>
        <taxon>Spirochaetota</taxon>
        <taxon>Spirochaetia</taxon>
        <taxon>Leptospirales</taxon>
        <taxon>Leptospiraceae</taxon>
        <taxon>Leptospira</taxon>
    </lineage>
</organism>
<evidence type="ECO:0000255" key="1">
    <source>
        <dbReference type="HAMAP-Rule" id="MF_00210"/>
    </source>
</evidence>
<feature type="chain" id="PRO_1000099712" description="3-phosphoshikimate 1-carboxyvinyltransferase">
    <location>
        <begin position="1"/>
        <end position="440"/>
    </location>
</feature>
<feature type="active site" description="Proton acceptor" evidence="1">
    <location>
        <position position="315"/>
    </location>
</feature>
<feature type="binding site" evidence="1">
    <location>
        <position position="19"/>
    </location>
    <ligand>
        <name>3-phosphoshikimate</name>
        <dbReference type="ChEBI" id="CHEBI:145989"/>
    </ligand>
</feature>
<feature type="binding site" evidence="1">
    <location>
        <position position="19"/>
    </location>
    <ligand>
        <name>phosphoenolpyruvate</name>
        <dbReference type="ChEBI" id="CHEBI:58702"/>
    </ligand>
</feature>
<feature type="binding site" evidence="1">
    <location>
        <position position="20"/>
    </location>
    <ligand>
        <name>3-phosphoshikimate</name>
        <dbReference type="ChEBI" id="CHEBI:145989"/>
    </ligand>
</feature>
<feature type="binding site" evidence="1">
    <location>
        <position position="24"/>
    </location>
    <ligand>
        <name>3-phosphoshikimate</name>
        <dbReference type="ChEBI" id="CHEBI:145989"/>
    </ligand>
</feature>
<feature type="binding site" evidence="1">
    <location>
        <position position="92"/>
    </location>
    <ligand>
        <name>phosphoenolpyruvate</name>
        <dbReference type="ChEBI" id="CHEBI:58702"/>
    </ligand>
</feature>
<feature type="binding site" evidence="1">
    <location>
        <position position="121"/>
    </location>
    <ligand>
        <name>phosphoenolpyruvate</name>
        <dbReference type="ChEBI" id="CHEBI:58702"/>
    </ligand>
</feature>
<feature type="binding site" evidence="1">
    <location>
        <position position="166"/>
    </location>
    <ligand>
        <name>3-phosphoshikimate</name>
        <dbReference type="ChEBI" id="CHEBI:145989"/>
    </ligand>
</feature>
<feature type="binding site" evidence="1">
    <location>
        <position position="168"/>
    </location>
    <ligand>
        <name>3-phosphoshikimate</name>
        <dbReference type="ChEBI" id="CHEBI:145989"/>
    </ligand>
</feature>
<feature type="binding site" evidence="1">
    <location>
        <position position="168"/>
    </location>
    <ligand>
        <name>phosphoenolpyruvate</name>
        <dbReference type="ChEBI" id="CHEBI:58702"/>
    </ligand>
</feature>
<feature type="binding site" evidence="1">
    <location>
        <position position="315"/>
    </location>
    <ligand>
        <name>3-phosphoshikimate</name>
        <dbReference type="ChEBI" id="CHEBI:145989"/>
    </ligand>
</feature>
<feature type="binding site" evidence="1">
    <location>
        <position position="342"/>
    </location>
    <ligand>
        <name>3-phosphoshikimate</name>
        <dbReference type="ChEBI" id="CHEBI:145989"/>
    </ligand>
</feature>
<feature type="binding site" evidence="1">
    <location>
        <position position="346"/>
    </location>
    <ligand>
        <name>phosphoenolpyruvate</name>
        <dbReference type="ChEBI" id="CHEBI:58702"/>
    </ligand>
</feature>
<feature type="binding site" evidence="1">
    <location>
        <position position="399"/>
    </location>
    <ligand>
        <name>phosphoenolpyruvate</name>
        <dbReference type="ChEBI" id="CHEBI:58702"/>
    </ligand>
</feature>
<protein>
    <recommendedName>
        <fullName evidence="1">3-phosphoshikimate 1-carboxyvinyltransferase</fullName>
        <ecNumber evidence="1">2.5.1.19</ecNumber>
    </recommendedName>
    <alternativeName>
        <fullName evidence="1">5-enolpyruvylshikimate-3-phosphate synthase</fullName>
        <shortName evidence="1">EPSP synthase</shortName>
        <shortName evidence="1">EPSPS</shortName>
    </alternativeName>
</protein>
<comment type="function">
    <text evidence="1">Catalyzes the transfer of the enolpyruvyl moiety of phosphoenolpyruvate (PEP) to the 5-hydroxyl of shikimate-3-phosphate (S3P) to produce enolpyruvyl shikimate-3-phosphate and inorganic phosphate.</text>
</comment>
<comment type="catalytic activity">
    <reaction evidence="1">
        <text>3-phosphoshikimate + phosphoenolpyruvate = 5-O-(1-carboxyvinyl)-3-phosphoshikimate + phosphate</text>
        <dbReference type="Rhea" id="RHEA:21256"/>
        <dbReference type="ChEBI" id="CHEBI:43474"/>
        <dbReference type="ChEBI" id="CHEBI:57701"/>
        <dbReference type="ChEBI" id="CHEBI:58702"/>
        <dbReference type="ChEBI" id="CHEBI:145989"/>
        <dbReference type="EC" id="2.5.1.19"/>
    </reaction>
    <physiologicalReaction direction="left-to-right" evidence="1">
        <dbReference type="Rhea" id="RHEA:21257"/>
    </physiologicalReaction>
</comment>
<comment type="pathway">
    <text evidence="1">Metabolic intermediate biosynthesis; chorismate biosynthesis; chorismate from D-erythrose 4-phosphate and phosphoenolpyruvate: step 6/7.</text>
</comment>
<comment type="subunit">
    <text evidence="1">Monomer.</text>
</comment>
<comment type="subcellular location">
    <subcellularLocation>
        <location evidence="1">Cytoplasm</location>
    </subcellularLocation>
</comment>
<comment type="similarity">
    <text evidence="1">Belongs to the EPSP synthase family.</text>
</comment>
<dbReference type="EC" id="2.5.1.19" evidence="1"/>
<dbReference type="EMBL" id="CP000350">
    <property type="protein sequence ID" value="ABJ75578.1"/>
    <property type="molecule type" value="Genomic_DNA"/>
</dbReference>
<dbReference type="RefSeq" id="WP_011670563.1">
    <property type="nucleotide sequence ID" value="NC_008510.1"/>
</dbReference>
<dbReference type="SMR" id="Q04U42"/>
<dbReference type="KEGG" id="lbj:LBJ_0934"/>
<dbReference type="HOGENOM" id="CLU_024321_0_1_12"/>
<dbReference type="UniPathway" id="UPA00053">
    <property type="reaction ID" value="UER00089"/>
</dbReference>
<dbReference type="Proteomes" id="UP000000656">
    <property type="component" value="Chromosome 1"/>
</dbReference>
<dbReference type="GO" id="GO:0005737">
    <property type="term" value="C:cytoplasm"/>
    <property type="evidence" value="ECO:0007669"/>
    <property type="project" value="UniProtKB-SubCell"/>
</dbReference>
<dbReference type="GO" id="GO:0003866">
    <property type="term" value="F:3-phosphoshikimate 1-carboxyvinyltransferase activity"/>
    <property type="evidence" value="ECO:0007669"/>
    <property type="project" value="UniProtKB-UniRule"/>
</dbReference>
<dbReference type="GO" id="GO:0008652">
    <property type="term" value="P:amino acid biosynthetic process"/>
    <property type="evidence" value="ECO:0007669"/>
    <property type="project" value="UniProtKB-KW"/>
</dbReference>
<dbReference type="GO" id="GO:0009073">
    <property type="term" value="P:aromatic amino acid family biosynthetic process"/>
    <property type="evidence" value="ECO:0007669"/>
    <property type="project" value="UniProtKB-KW"/>
</dbReference>
<dbReference type="GO" id="GO:0009423">
    <property type="term" value="P:chorismate biosynthetic process"/>
    <property type="evidence" value="ECO:0007669"/>
    <property type="project" value="UniProtKB-UniRule"/>
</dbReference>
<dbReference type="CDD" id="cd01556">
    <property type="entry name" value="EPSP_synthase"/>
    <property type="match status" value="1"/>
</dbReference>
<dbReference type="FunFam" id="3.65.10.10:FF:000005">
    <property type="entry name" value="3-phosphoshikimate 1-carboxyvinyltransferase"/>
    <property type="match status" value="1"/>
</dbReference>
<dbReference type="Gene3D" id="3.65.10.10">
    <property type="entry name" value="Enolpyruvate transferase domain"/>
    <property type="match status" value="2"/>
</dbReference>
<dbReference type="HAMAP" id="MF_00210">
    <property type="entry name" value="EPSP_synth"/>
    <property type="match status" value="1"/>
</dbReference>
<dbReference type="InterPro" id="IPR001986">
    <property type="entry name" value="Enolpyruvate_Tfrase_dom"/>
</dbReference>
<dbReference type="InterPro" id="IPR036968">
    <property type="entry name" value="Enolpyruvate_Tfrase_sf"/>
</dbReference>
<dbReference type="InterPro" id="IPR006264">
    <property type="entry name" value="EPSP_synthase"/>
</dbReference>
<dbReference type="InterPro" id="IPR023193">
    <property type="entry name" value="EPSP_synthase_CS"/>
</dbReference>
<dbReference type="InterPro" id="IPR013792">
    <property type="entry name" value="RNA3'P_cycl/enolpyr_Trfase_a/b"/>
</dbReference>
<dbReference type="NCBIfam" id="TIGR01356">
    <property type="entry name" value="aroA"/>
    <property type="match status" value="1"/>
</dbReference>
<dbReference type="PANTHER" id="PTHR21090">
    <property type="entry name" value="AROM/DEHYDROQUINATE SYNTHASE"/>
    <property type="match status" value="1"/>
</dbReference>
<dbReference type="PANTHER" id="PTHR21090:SF5">
    <property type="entry name" value="PENTAFUNCTIONAL AROM POLYPEPTIDE"/>
    <property type="match status" value="1"/>
</dbReference>
<dbReference type="Pfam" id="PF00275">
    <property type="entry name" value="EPSP_synthase"/>
    <property type="match status" value="1"/>
</dbReference>
<dbReference type="PIRSF" id="PIRSF000505">
    <property type="entry name" value="EPSPS"/>
    <property type="match status" value="1"/>
</dbReference>
<dbReference type="SUPFAM" id="SSF55205">
    <property type="entry name" value="EPT/RTPC-like"/>
    <property type="match status" value="1"/>
</dbReference>
<dbReference type="PROSITE" id="PS00885">
    <property type="entry name" value="EPSP_SYNTHASE_2"/>
    <property type="match status" value="1"/>
</dbReference>
<accession>Q04U42</accession>
<reference key="1">
    <citation type="journal article" date="2006" name="Proc. Natl. Acad. Sci. U.S.A.">
        <title>Genome reduction in Leptospira borgpetersenii reflects limited transmission potential.</title>
        <authorList>
            <person name="Bulach D.M."/>
            <person name="Zuerner R.L."/>
            <person name="Wilson P."/>
            <person name="Seemann T."/>
            <person name="McGrath A."/>
            <person name="Cullen P.A."/>
            <person name="Davis J."/>
            <person name="Johnson M."/>
            <person name="Kuczek E."/>
            <person name="Alt D.P."/>
            <person name="Peterson-Burch B."/>
            <person name="Coppel R.L."/>
            <person name="Rood J.I."/>
            <person name="Davies J.K."/>
            <person name="Adler B."/>
        </authorList>
    </citation>
    <scope>NUCLEOTIDE SEQUENCE [LARGE SCALE GENOMIC DNA]</scope>
    <source>
        <strain>JB197</strain>
    </source>
</reference>